<sequence length="179" mass="19561">MSRIGKRPIEIPSGVKVSYVTPILKVEGPKGSLLREIMSDIALEIEEKSVSVNRADDAIKSRSAHGLTRTLINNMVVGVTKGFEKILEINGVGYRAEAKGDVLSLSLGYSHPINFPLPKGITVEVDKMTKVFVRGIDKELVGQTAAKIRSFRGPEPYKGKGIKYADERILRKAGKTGKK</sequence>
<organism>
    <name type="scientific">Geobacter metallireducens (strain ATCC 53774 / DSM 7210 / GS-15)</name>
    <dbReference type="NCBI Taxonomy" id="269799"/>
    <lineage>
        <taxon>Bacteria</taxon>
        <taxon>Pseudomonadati</taxon>
        <taxon>Thermodesulfobacteriota</taxon>
        <taxon>Desulfuromonadia</taxon>
        <taxon>Geobacterales</taxon>
        <taxon>Geobacteraceae</taxon>
        <taxon>Geobacter</taxon>
    </lineage>
</organism>
<dbReference type="EMBL" id="CP000148">
    <property type="protein sequence ID" value="ABB30883.1"/>
    <property type="molecule type" value="Genomic_DNA"/>
</dbReference>
<dbReference type="RefSeq" id="WP_004514251.1">
    <property type="nucleotide sequence ID" value="NC_007517.1"/>
</dbReference>
<dbReference type="SMR" id="Q39XZ1"/>
<dbReference type="STRING" id="269799.Gmet_0641"/>
<dbReference type="KEGG" id="gme:Gmet_0641"/>
<dbReference type="eggNOG" id="COG0097">
    <property type="taxonomic scope" value="Bacteria"/>
</dbReference>
<dbReference type="HOGENOM" id="CLU_065464_1_2_7"/>
<dbReference type="Proteomes" id="UP000007073">
    <property type="component" value="Chromosome"/>
</dbReference>
<dbReference type="GO" id="GO:0022625">
    <property type="term" value="C:cytosolic large ribosomal subunit"/>
    <property type="evidence" value="ECO:0007669"/>
    <property type="project" value="TreeGrafter"/>
</dbReference>
<dbReference type="GO" id="GO:0019843">
    <property type="term" value="F:rRNA binding"/>
    <property type="evidence" value="ECO:0007669"/>
    <property type="project" value="UniProtKB-UniRule"/>
</dbReference>
<dbReference type="GO" id="GO:0003735">
    <property type="term" value="F:structural constituent of ribosome"/>
    <property type="evidence" value="ECO:0007669"/>
    <property type="project" value="InterPro"/>
</dbReference>
<dbReference type="GO" id="GO:0002181">
    <property type="term" value="P:cytoplasmic translation"/>
    <property type="evidence" value="ECO:0007669"/>
    <property type="project" value="TreeGrafter"/>
</dbReference>
<dbReference type="FunFam" id="3.90.930.12:FF:000001">
    <property type="entry name" value="50S ribosomal protein L6"/>
    <property type="match status" value="1"/>
</dbReference>
<dbReference type="FunFam" id="3.90.930.12:FF:000002">
    <property type="entry name" value="50S ribosomal protein L6"/>
    <property type="match status" value="1"/>
</dbReference>
<dbReference type="Gene3D" id="3.90.930.12">
    <property type="entry name" value="Ribosomal protein L6, alpha-beta domain"/>
    <property type="match status" value="2"/>
</dbReference>
<dbReference type="HAMAP" id="MF_01365_B">
    <property type="entry name" value="Ribosomal_uL6_B"/>
    <property type="match status" value="1"/>
</dbReference>
<dbReference type="InterPro" id="IPR000702">
    <property type="entry name" value="Ribosomal_uL6-like"/>
</dbReference>
<dbReference type="InterPro" id="IPR036789">
    <property type="entry name" value="Ribosomal_uL6-like_a/b-dom_sf"/>
</dbReference>
<dbReference type="InterPro" id="IPR020040">
    <property type="entry name" value="Ribosomal_uL6_a/b-dom"/>
</dbReference>
<dbReference type="InterPro" id="IPR019906">
    <property type="entry name" value="Ribosomal_uL6_bac-type"/>
</dbReference>
<dbReference type="InterPro" id="IPR002358">
    <property type="entry name" value="Ribosomal_uL6_CS"/>
</dbReference>
<dbReference type="NCBIfam" id="TIGR03654">
    <property type="entry name" value="L6_bact"/>
    <property type="match status" value="1"/>
</dbReference>
<dbReference type="PANTHER" id="PTHR11655">
    <property type="entry name" value="60S/50S RIBOSOMAL PROTEIN L6/L9"/>
    <property type="match status" value="1"/>
</dbReference>
<dbReference type="PANTHER" id="PTHR11655:SF14">
    <property type="entry name" value="LARGE RIBOSOMAL SUBUNIT PROTEIN UL6M"/>
    <property type="match status" value="1"/>
</dbReference>
<dbReference type="Pfam" id="PF00347">
    <property type="entry name" value="Ribosomal_L6"/>
    <property type="match status" value="2"/>
</dbReference>
<dbReference type="PIRSF" id="PIRSF002162">
    <property type="entry name" value="Ribosomal_L6"/>
    <property type="match status" value="1"/>
</dbReference>
<dbReference type="PRINTS" id="PR00059">
    <property type="entry name" value="RIBOSOMALL6"/>
</dbReference>
<dbReference type="SUPFAM" id="SSF56053">
    <property type="entry name" value="Ribosomal protein L6"/>
    <property type="match status" value="2"/>
</dbReference>
<dbReference type="PROSITE" id="PS00525">
    <property type="entry name" value="RIBOSOMAL_L6_1"/>
    <property type="match status" value="1"/>
</dbReference>
<name>RL6_GEOMG</name>
<proteinExistence type="inferred from homology"/>
<reference key="1">
    <citation type="journal article" date="2009" name="BMC Microbiol.">
        <title>The genome sequence of Geobacter metallireducens: features of metabolism, physiology and regulation common and dissimilar to Geobacter sulfurreducens.</title>
        <authorList>
            <person name="Aklujkar M."/>
            <person name="Krushkal J."/>
            <person name="DiBartolo G."/>
            <person name="Lapidus A."/>
            <person name="Land M.L."/>
            <person name="Lovley D.R."/>
        </authorList>
    </citation>
    <scope>NUCLEOTIDE SEQUENCE [LARGE SCALE GENOMIC DNA]</scope>
    <source>
        <strain>ATCC 53774 / DSM 7210 / GS-15</strain>
    </source>
</reference>
<comment type="function">
    <text evidence="1">This protein binds to the 23S rRNA, and is important in its secondary structure. It is located near the subunit interface in the base of the L7/L12 stalk, and near the tRNA binding site of the peptidyltransferase center.</text>
</comment>
<comment type="subunit">
    <text evidence="1">Part of the 50S ribosomal subunit.</text>
</comment>
<comment type="similarity">
    <text evidence="1">Belongs to the universal ribosomal protein uL6 family.</text>
</comment>
<feature type="chain" id="PRO_0000260873" description="Large ribosomal subunit protein uL6">
    <location>
        <begin position="1"/>
        <end position="179"/>
    </location>
</feature>
<gene>
    <name evidence="1" type="primary">rplF</name>
    <name type="ordered locus">Gmet_0641</name>
</gene>
<accession>Q39XZ1</accession>
<keyword id="KW-1185">Reference proteome</keyword>
<keyword id="KW-0687">Ribonucleoprotein</keyword>
<keyword id="KW-0689">Ribosomal protein</keyword>
<keyword id="KW-0694">RNA-binding</keyword>
<keyword id="KW-0699">rRNA-binding</keyword>
<protein>
    <recommendedName>
        <fullName evidence="1">Large ribosomal subunit protein uL6</fullName>
    </recommendedName>
    <alternativeName>
        <fullName evidence="2">50S ribosomal protein L6</fullName>
    </alternativeName>
</protein>
<evidence type="ECO:0000255" key="1">
    <source>
        <dbReference type="HAMAP-Rule" id="MF_01365"/>
    </source>
</evidence>
<evidence type="ECO:0000305" key="2"/>